<evidence type="ECO:0000255" key="1">
    <source>
        <dbReference type="HAMAP-Rule" id="MF_01367"/>
    </source>
</evidence>
<evidence type="ECO:0000305" key="2"/>
<proteinExistence type="inferred from homology"/>
<gene>
    <name evidence="1" type="primary">rplN</name>
    <name evidence="1" type="synonym">rpl14</name>
    <name type="ordered locus">P9301_17391</name>
</gene>
<sequence length="121" mass="13377">MIQQETYLTVADNSGAKRLQCIRVLGSNRRYAHVGDVIVATVKDALPNMGVKKSEVVKAVIVRTKATLRRNTGNSIRFDDNAAVLINEDKNPKGTRVFGPVARELRDKNYTKIVSLAPEVI</sequence>
<name>RL14_PROM0</name>
<keyword id="KW-1185">Reference proteome</keyword>
<keyword id="KW-0687">Ribonucleoprotein</keyword>
<keyword id="KW-0689">Ribosomal protein</keyword>
<keyword id="KW-0694">RNA-binding</keyword>
<keyword id="KW-0699">rRNA-binding</keyword>
<reference key="1">
    <citation type="journal article" date="2007" name="PLoS Genet.">
        <title>Patterns and implications of gene gain and loss in the evolution of Prochlorococcus.</title>
        <authorList>
            <person name="Kettler G.C."/>
            <person name="Martiny A.C."/>
            <person name="Huang K."/>
            <person name="Zucker J."/>
            <person name="Coleman M.L."/>
            <person name="Rodrigue S."/>
            <person name="Chen F."/>
            <person name="Lapidus A."/>
            <person name="Ferriera S."/>
            <person name="Johnson J."/>
            <person name="Steglich C."/>
            <person name="Church G.M."/>
            <person name="Richardson P."/>
            <person name="Chisholm S.W."/>
        </authorList>
    </citation>
    <scope>NUCLEOTIDE SEQUENCE [LARGE SCALE GENOMIC DNA]</scope>
    <source>
        <strain>MIT 9301</strain>
    </source>
</reference>
<accession>A3PF37</accession>
<protein>
    <recommendedName>
        <fullName evidence="1">Large ribosomal subunit protein uL14</fullName>
    </recommendedName>
    <alternativeName>
        <fullName evidence="2">50S ribosomal protein L14</fullName>
    </alternativeName>
</protein>
<comment type="function">
    <text evidence="1">Binds to 23S rRNA. Forms part of two intersubunit bridges in the 70S ribosome.</text>
</comment>
<comment type="subunit">
    <text evidence="1">Part of the 50S ribosomal subunit. Forms a cluster with proteins L3 and L19. In the 70S ribosome, L14 and L19 interact and together make contacts with the 16S rRNA in bridges B5 and B8.</text>
</comment>
<comment type="similarity">
    <text evidence="1">Belongs to the universal ribosomal protein uL14 family.</text>
</comment>
<organism>
    <name type="scientific">Prochlorococcus marinus (strain MIT 9301)</name>
    <dbReference type="NCBI Taxonomy" id="167546"/>
    <lineage>
        <taxon>Bacteria</taxon>
        <taxon>Bacillati</taxon>
        <taxon>Cyanobacteriota</taxon>
        <taxon>Cyanophyceae</taxon>
        <taxon>Synechococcales</taxon>
        <taxon>Prochlorococcaceae</taxon>
        <taxon>Prochlorococcus</taxon>
    </lineage>
</organism>
<feature type="chain" id="PRO_1000055666" description="Large ribosomal subunit protein uL14">
    <location>
        <begin position="1"/>
        <end position="121"/>
    </location>
</feature>
<dbReference type="EMBL" id="CP000576">
    <property type="protein sequence ID" value="ABO18362.1"/>
    <property type="molecule type" value="Genomic_DNA"/>
</dbReference>
<dbReference type="RefSeq" id="WP_002807235.1">
    <property type="nucleotide sequence ID" value="NC_009091.1"/>
</dbReference>
<dbReference type="SMR" id="A3PF37"/>
<dbReference type="STRING" id="167546.P9301_17391"/>
<dbReference type="KEGG" id="pmg:P9301_17391"/>
<dbReference type="eggNOG" id="COG0093">
    <property type="taxonomic scope" value="Bacteria"/>
</dbReference>
<dbReference type="HOGENOM" id="CLU_095071_2_1_3"/>
<dbReference type="OrthoDB" id="9806379at2"/>
<dbReference type="Proteomes" id="UP000001430">
    <property type="component" value="Chromosome"/>
</dbReference>
<dbReference type="GO" id="GO:0022625">
    <property type="term" value="C:cytosolic large ribosomal subunit"/>
    <property type="evidence" value="ECO:0007669"/>
    <property type="project" value="TreeGrafter"/>
</dbReference>
<dbReference type="GO" id="GO:0070180">
    <property type="term" value="F:large ribosomal subunit rRNA binding"/>
    <property type="evidence" value="ECO:0007669"/>
    <property type="project" value="TreeGrafter"/>
</dbReference>
<dbReference type="GO" id="GO:0003735">
    <property type="term" value="F:structural constituent of ribosome"/>
    <property type="evidence" value="ECO:0007669"/>
    <property type="project" value="InterPro"/>
</dbReference>
<dbReference type="GO" id="GO:0006412">
    <property type="term" value="P:translation"/>
    <property type="evidence" value="ECO:0007669"/>
    <property type="project" value="UniProtKB-UniRule"/>
</dbReference>
<dbReference type="CDD" id="cd00337">
    <property type="entry name" value="Ribosomal_uL14"/>
    <property type="match status" value="1"/>
</dbReference>
<dbReference type="FunFam" id="2.40.150.20:FF:000001">
    <property type="entry name" value="50S ribosomal protein L14"/>
    <property type="match status" value="1"/>
</dbReference>
<dbReference type="Gene3D" id="2.40.150.20">
    <property type="entry name" value="Ribosomal protein L14"/>
    <property type="match status" value="1"/>
</dbReference>
<dbReference type="HAMAP" id="MF_01367">
    <property type="entry name" value="Ribosomal_uL14"/>
    <property type="match status" value="1"/>
</dbReference>
<dbReference type="InterPro" id="IPR000218">
    <property type="entry name" value="Ribosomal_uL14"/>
</dbReference>
<dbReference type="InterPro" id="IPR005745">
    <property type="entry name" value="Ribosomal_uL14_bac-type"/>
</dbReference>
<dbReference type="InterPro" id="IPR036853">
    <property type="entry name" value="Ribosomal_uL14_sf"/>
</dbReference>
<dbReference type="NCBIfam" id="TIGR01067">
    <property type="entry name" value="rplN_bact"/>
    <property type="match status" value="1"/>
</dbReference>
<dbReference type="PANTHER" id="PTHR11761">
    <property type="entry name" value="50S/60S RIBOSOMAL PROTEIN L14/L23"/>
    <property type="match status" value="1"/>
</dbReference>
<dbReference type="PANTHER" id="PTHR11761:SF3">
    <property type="entry name" value="LARGE RIBOSOMAL SUBUNIT PROTEIN UL14M"/>
    <property type="match status" value="1"/>
</dbReference>
<dbReference type="Pfam" id="PF00238">
    <property type="entry name" value="Ribosomal_L14"/>
    <property type="match status" value="1"/>
</dbReference>
<dbReference type="SMART" id="SM01374">
    <property type="entry name" value="Ribosomal_L14"/>
    <property type="match status" value="1"/>
</dbReference>
<dbReference type="SUPFAM" id="SSF50193">
    <property type="entry name" value="Ribosomal protein L14"/>
    <property type="match status" value="1"/>
</dbReference>